<protein>
    <recommendedName>
        <fullName evidence="1">Fumarate reductase subunit D</fullName>
    </recommendedName>
    <alternativeName>
        <fullName evidence="1">Fumarate reductase 13 kDa hydrophobic protein</fullName>
    </alternativeName>
    <alternativeName>
        <fullName evidence="1">Quinol-fumarate reductase subunit D</fullName>
        <shortName evidence="1">QFR subunit D</shortName>
    </alternativeName>
</protein>
<feature type="chain" id="PRO_1000147955" description="Fumarate reductase subunit D">
    <location>
        <begin position="1"/>
        <end position="119"/>
    </location>
</feature>
<feature type="transmembrane region" description="Helical" evidence="1">
    <location>
        <begin position="26"/>
        <end position="46"/>
    </location>
</feature>
<feature type="transmembrane region" description="Helical" evidence="1">
    <location>
        <begin position="55"/>
        <end position="75"/>
    </location>
</feature>
<feature type="transmembrane region" description="Helical" evidence="1">
    <location>
        <begin position="99"/>
        <end position="119"/>
    </location>
</feature>
<name>FRDD_ECO55</name>
<sequence length="119" mass="13121">MINPNPKRSDEPVFWGLFGAGGMWSAIIAPVMILLVGILLPLGLFPGDALSYERVLAFAQSFIGRVFLFLMIVLPLWCGLHRMHHAMHDLKIHVPAGKWVFYGLAAILTVVTLIGIVTI</sequence>
<accession>B7LC12</accession>
<dbReference type="EMBL" id="CU928145">
    <property type="protein sequence ID" value="CAV01612.1"/>
    <property type="molecule type" value="Genomic_DNA"/>
</dbReference>
<dbReference type="RefSeq" id="WP_001299198.1">
    <property type="nucleotide sequence ID" value="NC_011748.1"/>
</dbReference>
<dbReference type="SMR" id="B7LC12"/>
<dbReference type="GeneID" id="93777671"/>
<dbReference type="KEGG" id="eck:EC55989_4708"/>
<dbReference type="HOGENOM" id="CLU_168367_0_0_6"/>
<dbReference type="Proteomes" id="UP000000746">
    <property type="component" value="Chromosome"/>
</dbReference>
<dbReference type="GO" id="GO:0045283">
    <property type="term" value="C:fumarate reductase complex"/>
    <property type="evidence" value="ECO:0007669"/>
    <property type="project" value="UniProtKB-UniRule"/>
</dbReference>
<dbReference type="GO" id="GO:0005886">
    <property type="term" value="C:plasma membrane"/>
    <property type="evidence" value="ECO:0007669"/>
    <property type="project" value="UniProtKB-SubCell"/>
</dbReference>
<dbReference type="GO" id="GO:0000104">
    <property type="term" value="F:succinate dehydrogenase activity"/>
    <property type="evidence" value="ECO:0007669"/>
    <property type="project" value="UniProtKB-UniRule"/>
</dbReference>
<dbReference type="GO" id="GO:0006106">
    <property type="term" value="P:fumarate metabolic process"/>
    <property type="evidence" value="ECO:0007669"/>
    <property type="project" value="InterPro"/>
</dbReference>
<dbReference type="CDD" id="cd00547">
    <property type="entry name" value="QFR_TypeD_subunitD"/>
    <property type="match status" value="1"/>
</dbReference>
<dbReference type="FunFam" id="1.20.1300.10:FF:000002">
    <property type="entry name" value="Fumarate reductase subunit D"/>
    <property type="match status" value="1"/>
</dbReference>
<dbReference type="Gene3D" id="1.20.1300.10">
    <property type="entry name" value="Fumarate reductase/succinate dehydrogenase, transmembrane subunit"/>
    <property type="match status" value="1"/>
</dbReference>
<dbReference type="HAMAP" id="MF_00709">
    <property type="entry name" value="Fumarate_red_D"/>
    <property type="match status" value="1"/>
</dbReference>
<dbReference type="InterPro" id="IPR003418">
    <property type="entry name" value="Fumarate_red_D"/>
</dbReference>
<dbReference type="InterPro" id="IPR034804">
    <property type="entry name" value="SQR/QFR_C/D"/>
</dbReference>
<dbReference type="NCBIfam" id="NF003977">
    <property type="entry name" value="PRK05470.1-1"/>
    <property type="match status" value="1"/>
</dbReference>
<dbReference type="Pfam" id="PF02313">
    <property type="entry name" value="Fumarate_red_D"/>
    <property type="match status" value="1"/>
</dbReference>
<dbReference type="PIRSF" id="PIRSF000179">
    <property type="entry name" value="FrdD"/>
    <property type="match status" value="1"/>
</dbReference>
<dbReference type="SUPFAM" id="SSF81343">
    <property type="entry name" value="Fumarate reductase respiratory complex transmembrane subunits"/>
    <property type="match status" value="1"/>
</dbReference>
<keyword id="KW-0997">Cell inner membrane</keyword>
<keyword id="KW-1003">Cell membrane</keyword>
<keyword id="KW-0472">Membrane</keyword>
<keyword id="KW-1185">Reference proteome</keyword>
<keyword id="KW-0812">Transmembrane</keyword>
<keyword id="KW-1133">Transmembrane helix</keyword>
<reference key="1">
    <citation type="journal article" date="2009" name="PLoS Genet.">
        <title>Organised genome dynamics in the Escherichia coli species results in highly diverse adaptive paths.</title>
        <authorList>
            <person name="Touchon M."/>
            <person name="Hoede C."/>
            <person name="Tenaillon O."/>
            <person name="Barbe V."/>
            <person name="Baeriswyl S."/>
            <person name="Bidet P."/>
            <person name="Bingen E."/>
            <person name="Bonacorsi S."/>
            <person name="Bouchier C."/>
            <person name="Bouvet O."/>
            <person name="Calteau A."/>
            <person name="Chiapello H."/>
            <person name="Clermont O."/>
            <person name="Cruveiller S."/>
            <person name="Danchin A."/>
            <person name="Diard M."/>
            <person name="Dossat C."/>
            <person name="Karoui M.E."/>
            <person name="Frapy E."/>
            <person name="Garry L."/>
            <person name="Ghigo J.M."/>
            <person name="Gilles A.M."/>
            <person name="Johnson J."/>
            <person name="Le Bouguenec C."/>
            <person name="Lescat M."/>
            <person name="Mangenot S."/>
            <person name="Martinez-Jehanne V."/>
            <person name="Matic I."/>
            <person name="Nassif X."/>
            <person name="Oztas S."/>
            <person name="Petit M.A."/>
            <person name="Pichon C."/>
            <person name="Rouy Z."/>
            <person name="Ruf C.S."/>
            <person name="Schneider D."/>
            <person name="Tourret J."/>
            <person name="Vacherie B."/>
            <person name="Vallenet D."/>
            <person name="Medigue C."/>
            <person name="Rocha E.P.C."/>
            <person name="Denamur E."/>
        </authorList>
    </citation>
    <scope>NUCLEOTIDE SEQUENCE [LARGE SCALE GENOMIC DNA]</scope>
    <source>
        <strain>55989 / EAEC</strain>
    </source>
</reference>
<evidence type="ECO:0000255" key="1">
    <source>
        <dbReference type="HAMAP-Rule" id="MF_00709"/>
    </source>
</evidence>
<proteinExistence type="inferred from homology"/>
<gene>
    <name evidence="1" type="primary">frdD</name>
    <name type="ordered locus">EC55989_4708</name>
</gene>
<comment type="function">
    <text evidence="1">Two distinct, membrane-bound, FAD-containing enzymes are responsible for the catalysis of fumarate and succinate interconversion; fumarate reductase is used in anaerobic growth, and succinate dehydrogenase is used in aerobic growth. Anchors the catalytic components of the fumarate reductase complex to the cell inner membrane, binds quinones.</text>
</comment>
<comment type="subunit">
    <text evidence="1">Part of an enzyme complex containing four subunits: a flavoprotein (FrdA), an iron-sulfur protein (FrdB), and two hydrophobic anchor proteins (FrdC and FrdD).</text>
</comment>
<comment type="subcellular location">
    <subcellularLocation>
        <location evidence="1">Cell inner membrane</location>
        <topology evidence="1">Multi-pass membrane protein</topology>
    </subcellularLocation>
</comment>
<comment type="similarity">
    <text evidence="1">Belongs to the FrdD family.</text>
</comment>
<organism>
    <name type="scientific">Escherichia coli (strain 55989 / EAEC)</name>
    <dbReference type="NCBI Taxonomy" id="585055"/>
    <lineage>
        <taxon>Bacteria</taxon>
        <taxon>Pseudomonadati</taxon>
        <taxon>Pseudomonadota</taxon>
        <taxon>Gammaproteobacteria</taxon>
        <taxon>Enterobacterales</taxon>
        <taxon>Enterobacteriaceae</taxon>
        <taxon>Escherichia</taxon>
    </lineage>
</organism>